<feature type="signal peptide" evidence="1">
    <location>
        <begin position="1"/>
        <end position="28"/>
    </location>
</feature>
<feature type="chain" id="PRO_0000014138" description="Uncharacterized lipoprotein ML0489">
    <location>
        <begin position="29"/>
        <end position="555"/>
    </location>
</feature>
<feature type="lipid moiety-binding region" description="N-palmitoyl cysteine" evidence="2">
    <location>
        <position position="29"/>
    </location>
</feature>
<feature type="lipid moiety-binding region" description="S-diacylglycerol cysteine" evidence="2">
    <location>
        <position position="29"/>
    </location>
</feature>
<reference key="1">
    <citation type="submission" date="1994-03" db="EMBL/GenBank/DDBJ databases">
        <authorList>
            <person name="Smith D.R."/>
            <person name="Robison K."/>
        </authorList>
    </citation>
    <scope>NUCLEOTIDE SEQUENCE [GENOMIC DNA]</scope>
</reference>
<reference key="2">
    <citation type="journal article" date="2001" name="Nature">
        <title>Massive gene decay in the leprosy bacillus.</title>
        <authorList>
            <person name="Cole S.T."/>
            <person name="Eiglmeier K."/>
            <person name="Parkhill J."/>
            <person name="James K.D."/>
            <person name="Thomson N.R."/>
            <person name="Wheeler P.R."/>
            <person name="Honore N."/>
            <person name="Garnier T."/>
            <person name="Churcher C.M."/>
            <person name="Harris D.E."/>
            <person name="Mungall K.L."/>
            <person name="Basham D."/>
            <person name="Brown D."/>
            <person name="Chillingworth T."/>
            <person name="Connor R."/>
            <person name="Davies R.M."/>
            <person name="Devlin K."/>
            <person name="Duthoy S."/>
            <person name="Feltwell T."/>
            <person name="Fraser A."/>
            <person name="Hamlin N."/>
            <person name="Holroyd S."/>
            <person name="Hornsby T."/>
            <person name="Jagels K."/>
            <person name="Lacroix C."/>
            <person name="Maclean J."/>
            <person name="Moule S."/>
            <person name="Murphy L.D."/>
            <person name="Oliver K."/>
            <person name="Quail M.A."/>
            <person name="Rajandream M.A."/>
            <person name="Rutherford K.M."/>
            <person name="Rutter S."/>
            <person name="Seeger K."/>
            <person name="Simon S."/>
            <person name="Simmonds M."/>
            <person name="Skelton J."/>
            <person name="Squares R."/>
            <person name="Squares S."/>
            <person name="Stevens K."/>
            <person name="Taylor K."/>
            <person name="Whitehead S."/>
            <person name="Woodward J.R."/>
            <person name="Barrell B.G."/>
        </authorList>
    </citation>
    <scope>NUCLEOTIDE SEQUENCE [LARGE SCALE GENOMIC DNA]</scope>
    <source>
        <strain>TN</strain>
    </source>
</reference>
<gene>
    <name type="ordered locus">ML0489</name>
    <name type="ORF">B1177_C2_197</name>
    <name type="ORF">MLCB1259.07</name>
</gene>
<protein>
    <recommendedName>
        <fullName>Uncharacterized lipoprotein ML0489</fullName>
    </recommendedName>
</protein>
<organism>
    <name type="scientific">Mycobacterium leprae (strain TN)</name>
    <dbReference type="NCBI Taxonomy" id="272631"/>
    <lineage>
        <taxon>Bacteria</taxon>
        <taxon>Bacillati</taxon>
        <taxon>Actinomycetota</taxon>
        <taxon>Actinomycetes</taxon>
        <taxon>Mycobacteriales</taxon>
        <taxon>Mycobacteriaceae</taxon>
        <taxon>Mycobacterium</taxon>
    </lineage>
</organism>
<sequence>MRSGLFGVLRWTAVGLVATLVASLALTACSGSAAGEIVYVVDGALGTYNTNTIVGAASAGAQAFARTLIGFGYHGPDGQIVADHDFGTITVVGGVPLVLDYQIADNAVYSDGKQVTCDDLVLTWAAQSGRFPGFDAATQAGYRDIANIECLAGQKKSRVFFVPDRSVVDYEQLFAATSMMPSHVIADQLNIDVTEALLTHNATLVEQIARLWNTTWDLKPAVDLRRFPSSGPYKIESVLNGGAVVLVANDRWWGLKATTKRITVRPQEADIQDRVNNRSVDVVDVAVGSSGSLATPDNYARIDSPSAGIEQLIFAPQGLLAAAAARRALALCTPRDVVARDAGLSIANSRLSPATEDAIAAADGAREAGQFSKADPAAAHDALSGETLPVRIGYQGPNARLAATVGTIAKACAVAGISVSSVTLDSSTDPSGPQALRDGKIDVLLASTGGATGSGSSGSSSMDAYDLHTGNGNNLSGYANAQVDNNIGALAVSADPAERVRLLADSAPVLWADMPTLPLYRQQRMLLMSKTMYAVTRNPTRWGAGWNMDRWALVR</sequence>
<proteinExistence type="inferred from homology"/>
<evidence type="ECO:0000255" key="1">
    <source>
        <dbReference type="PROSITE-ProRule" id="PRU00303"/>
    </source>
</evidence>
<evidence type="ECO:0000305" key="2"/>
<comment type="subcellular location">
    <subcellularLocation>
        <location evidence="2">Cell membrane</location>
        <topology evidence="2">Lipid-anchor</topology>
    </subcellularLocation>
</comment>
<comment type="similarity">
    <text evidence="2">To M.tuberculosis Rv2585c and M.bovis Mb2616c.</text>
</comment>
<comment type="sequence caution" evidence="2">
    <conflict type="frameshift">
        <sequence resource="EMBL-CDS" id="AAA17096"/>
    </conflict>
</comment>
<name>Y489_MYCLE</name>
<dbReference type="EMBL" id="U00011">
    <property type="protein sequence ID" value="AAA17096.1"/>
    <property type="status" value="ALT_FRAME"/>
    <property type="molecule type" value="Genomic_DNA"/>
</dbReference>
<dbReference type="EMBL" id="AL023591">
    <property type="protein sequence ID" value="CAA19082.1"/>
    <property type="molecule type" value="Genomic_DNA"/>
</dbReference>
<dbReference type="EMBL" id="AL583918">
    <property type="protein sequence ID" value="CAC29997.1"/>
    <property type="molecule type" value="Genomic_DNA"/>
</dbReference>
<dbReference type="PIR" id="A86970">
    <property type="entry name" value="A86970"/>
</dbReference>
<dbReference type="PIR" id="S72732">
    <property type="entry name" value="S72732"/>
</dbReference>
<dbReference type="RefSeq" id="NP_301429.1">
    <property type="nucleotide sequence ID" value="NC_002677.1"/>
</dbReference>
<dbReference type="RefSeq" id="WP_010907753.1">
    <property type="nucleotide sequence ID" value="NC_002677.1"/>
</dbReference>
<dbReference type="SMR" id="Q49646"/>
<dbReference type="STRING" id="272631.gene:17574310"/>
<dbReference type="KEGG" id="mle:ML0489"/>
<dbReference type="PATRIC" id="fig|272631.5.peg.853"/>
<dbReference type="Leproma" id="ML0489"/>
<dbReference type="eggNOG" id="COG0747">
    <property type="taxonomic scope" value="Bacteria"/>
</dbReference>
<dbReference type="HOGENOM" id="CLU_017028_11_2_11"/>
<dbReference type="OrthoDB" id="7888869at2"/>
<dbReference type="Proteomes" id="UP000000806">
    <property type="component" value="Chromosome"/>
</dbReference>
<dbReference type="GO" id="GO:0005886">
    <property type="term" value="C:plasma membrane"/>
    <property type="evidence" value="ECO:0007669"/>
    <property type="project" value="UniProtKB-SubCell"/>
</dbReference>
<dbReference type="GO" id="GO:1904680">
    <property type="term" value="F:peptide transmembrane transporter activity"/>
    <property type="evidence" value="ECO:0007669"/>
    <property type="project" value="TreeGrafter"/>
</dbReference>
<dbReference type="GO" id="GO:0015833">
    <property type="term" value="P:peptide transport"/>
    <property type="evidence" value="ECO:0007669"/>
    <property type="project" value="TreeGrafter"/>
</dbReference>
<dbReference type="Gene3D" id="3.90.76.10">
    <property type="entry name" value="Dipeptide-binding Protein, Domain 1"/>
    <property type="match status" value="1"/>
</dbReference>
<dbReference type="Gene3D" id="3.10.105.10">
    <property type="entry name" value="Dipeptide-binding Protein, Domain 3"/>
    <property type="match status" value="1"/>
</dbReference>
<dbReference type="Gene3D" id="3.40.190.10">
    <property type="entry name" value="Periplasmic binding protein-like II"/>
    <property type="match status" value="1"/>
</dbReference>
<dbReference type="InterPro" id="IPR039424">
    <property type="entry name" value="SBP_5"/>
</dbReference>
<dbReference type="InterPro" id="IPR000914">
    <property type="entry name" value="SBP_5_dom"/>
</dbReference>
<dbReference type="PANTHER" id="PTHR30290:SF65">
    <property type="entry name" value="MONOACYL PHOSPHATIDYLINOSITOL TETRAMANNOSIDE-BINDING PROTEIN LPQW-RELATED"/>
    <property type="match status" value="1"/>
</dbReference>
<dbReference type="PANTHER" id="PTHR30290">
    <property type="entry name" value="PERIPLASMIC BINDING COMPONENT OF ABC TRANSPORTER"/>
    <property type="match status" value="1"/>
</dbReference>
<dbReference type="Pfam" id="PF00496">
    <property type="entry name" value="SBP_bac_5"/>
    <property type="match status" value="1"/>
</dbReference>
<dbReference type="SUPFAM" id="SSF53850">
    <property type="entry name" value="Periplasmic binding protein-like II"/>
    <property type="match status" value="1"/>
</dbReference>
<dbReference type="PROSITE" id="PS51257">
    <property type="entry name" value="PROKAR_LIPOPROTEIN"/>
    <property type="match status" value="1"/>
</dbReference>
<accession>Q49646</accession>
<accession>O69487</accession>
<keyword id="KW-1003">Cell membrane</keyword>
<keyword id="KW-0449">Lipoprotein</keyword>
<keyword id="KW-0472">Membrane</keyword>
<keyword id="KW-0564">Palmitate</keyword>
<keyword id="KW-1185">Reference proteome</keyword>
<keyword id="KW-0732">Signal</keyword>